<keyword id="KW-0028">Amino-acid biosynthesis</keyword>
<keyword id="KW-0057">Aromatic amino acid biosynthesis</keyword>
<keyword id="KW-0328">Glycosyltransferase</keyword>
<keyword id="KW-0460">Magnesium</keyword>
<keyword id="KW-0479">Metal-binding</keyword>
<keyword id="KW-0808">Transferase</keyword>
<keyword id="KW-0822">Tryptophan biosynthesis</keyword>
<protein>
    <recommendedName>
        <fullName evidence="1">Anthranilate phosphoribosyltransferase</fullName>
        <ecNumber evidence="1">2.4.2.18</ecNumber>
    </recommendedName>
</protein>
<evidence type="ECO:0000255" key="1">
    <source>
        <dbReference type="HAMAP-Rule" id="MF_00211"/>
    </source>
</evidence>
<comment type="function">
    <text evidence="1">Catalyzes the transfer of the phosphoribosyl group of 5-phosphorylribose-1-pyrophosphate (PRPP) to anthranilate to yield N-(5'-phosphoribosyl)-anthranilate (PRA).</text>
</comment>
<comment type="catalytic activity">
    <reaction evidence="1">
        <text>N-(5-phospho-beta-D-ribosyl)anthranilate + diphosphate = 5-phospho-alpha-D-ribose 1-diphosphate + anthranilate</text>
        <dbReference type="Rhea" id="RHEA:11768"/>
        <dbReference type="ChEBI" id="CHEBI:16567"/>
        <dbReference type="ChEBI" id="CHEBI:18277"/>
        <dbReference type="ChEBI" id="CHEBI:33019"/>
        <dbReference type="ChEBI" id="CHEBI:58017"/>
        <dbReference type="EC" id="2.4.2.18"/>
    </reaction>
</comment>
<comment type="cofactor">
    <cofactor evidence="1">
        <name>Mg(2+)</name>
        <dbReference type="ChEBI" id="CHEBI:18420"/>
    </cofactor>
    <text evidence="1">Binds 2 magnesium ions per monomer.</text>
</comment>
<comment type="pathway">
    <text evidence="1">Amino-acid biosynthesis; L-tryptophan biosynthesis; L-tryptophan from chorismate: step 2/5.</text>
</comment>
<comment type="subunit">
    <text evidence="1">Homodimer.</text>
</comment>
<comment type="similarity">
    <text evidence="1">Belongs to the anthranilate phosphoribosyltransferase family.</text>
</comment>
<accession>Q5N0L1</accession>
<reference key="1">
    <citation type="journal article" date="2007" name="Photosyn. Res.">
        <title>Complete nucleotide sequence of the freshwater unicellular cyanobacterium Synechococcus elongatus PCC 6301 chromosome: gene content and organization.</title>
        <authorList>
            <person name="Sugita C."/>
            <person name="Ogata K."/>
            <person name="Shikata M."/>
            <person name="Jikuya H."/>
            <person name="Takano J."/>
            <person name="Furumichi M."/>
            <person name="Kanehisa M."/>
            <person name="Omata T."/>
            <person name="Sugiura M."/>
            <person name="Sugita M."/>
        </authorList>
    </citation>
    <scope>NUCLEOTIDE SEQUENCE [LARGE SCALE GENOMIC DNA]</scope>
    <source>
        <strain>ATCC 27144 / PCC 6301 / SAUG 1402/1</strain>
    </source>
</reference>
<gene>
    <name evidence="1" type="primary">trpD</name>
    <name type="ordered locus">syc1969_d</name>
</gene>
<feature type="chain" id="PRO_0000227193" description="Anthranilate phosphoribosyltransferase">
    <location>
        <begin position="1"/>
        <end position="348"/>
    </location>
</feature>
<feature type="binding site" evidence="1">
    <location>
        <position position="91"/>
    </location>
    <ligand>
        <name>5-phospho-alpha-D-ribose 1-diphosphate</name>
        <dbReference type="ChEBI" id="CHEBI:58017"/>
    </ligand>
</feature>
<feature type="binding site" evidence="1">
    <location>
        <position position="91"/>
    </location>
    <ligand>
        <name>anthranilate</name>
        <dbReference type="ChEBI" id="CHEBI:16567"/>
        <label>1</label>
    </ligand>
</feature>
<feature type="binding site" evidence="1">
    <location>
        <begin position="94"/>
        <end position="95"/>
    </location>
    <ligand>
        <name>5-phospho-alpha-D-ribose 1-diphosphate</name>
        <dbReference type="ChEBI" id="CHEBI:58017"/>
    </ligand>
</feature>
<feature type="binding site" evidence="1">
    <location>
        <position position="99"/>
    </location>
    <ligand>
        <name>5-phospho-alpha-D-ribose 1-diphosphate</name>
        <dbReference type="ChEBI" id="CHEBI:58017"/>
    </ligand>
</feature>
<feature type="binding site" evidence="1">
    <location>
        <begin position="101"/>
        <end position="104"/>
    </location>
    <ligand>
        <name>5-phospho-alpha-D-ribose 1-diphosphate</name>
        <dbReference type="ChEBI" id="CHEBI:58017"/>
    </ligand>
</feature>
<feature type="binding site" evidence="1">
    <location>
        <position position="103"/>
    </location>
    <ligand>
        <name>Mg(2+)</name>
        <dbReference type="ChEBI" id="CHEBI:18420"/>
        <label>1</label>
    </ligand>
</feature>
<feature type="binding site" evidence="1">
    <location>
        <begin position="119"/>
        <end position="127"/>
    </location>
    <ligand>
        <name>5-phospho-alpha-D-ribose 1-diphosphate</name>
        <dbReference type="ChEBI" id="CHEBI:58017"/>
    </ligand>
</feature>
<feature type="binding site" evidence="1">
    <location>
        <position position="122"/>
    </location>
    <ligand>
        <name>anthranilate</name>
        <dbReference type="ChEBI" id="CHEBI:16567"/>
        <label>1</label>
    </ligand>
</feature>
<feature type="binding site" evidence="1">
    <location>
        <position position="131"/>
    </location>
    <ligand>
        <name>5-phospho-alpha-D-ribose 1-diphosphate</name>
        <dbReference type="ChEBI" id="CHEBI:58017"/>
    </ligand>
</feature>
<feature type="binding site" evidence="1">
    <location>
        <position position="177"/>
    </location>
    <ligand>
        <name>anthranilate</name>
        <dbReference type="ChEBI" id="CHEBI:16567"/>
        <label>2</label>
    </ligand>
</feature>
<feature type="binding site" evidence="1">
    <location>
        <position position="236"/>
    </location>
    <ligand>
        <name>Mg(2+)</name>
        <dbReference type="ChEBI" id="CHEBI:18420"/>
        <label>2</label>
    </ligand>
</feature>
<feature type="binding site" evidence="1">
    <location>
        <position position="237"/>
    </location>
    <ligand>
        <name>Mg(2+)</name>
        <dbReference type="ChEBI" id="CHEBI:18420"/>
        <label>1</label>
    </ligand>
</feature>
<feature type="binding site" evidence="1">
    <location>
        <position position="237"/>
    </location>
    <ligand>
        <name>Mg(2+)</name>
        <dbReference type="ChEBI" id="CHEBI:18420"/>
        <label>2</label>
    </ligand>
</feature>
<sequence length="348" mass="35972">MLVAPPAFAEAQVLLQRLLNHESLGAVQARALMEQWSSGTLPEALSGALLAALQSKGVSAQELAAMAQVLQEQAVAVEASDRREPLVDTCGTGGDGAETFNISTAVAFVTAAAGVKVAKHGNRSASGRVGSADVLEALGLNLTAPSDRIHAAVDEVGITFLFAPGWHPAMKAVAPLRKILGVRTVFNLLGPLVNPLRPTGQVIGVYNPGLLPTISGALAELGVRRAIVLHGREGLDEGGLADCMDLAIVREGQLSQQVVDPRDLGLTQAPTVALKGGSVEENADILKAVLQGKGTRAQQDAVLLNAALALEVGEQVDRLDQGIGLARSVLASGAAWQKLTQLAAFLQS</sequence>
<organism>
    <name type="scientific">Synechococcus sp. (strain ATCC 27144 / PCC 6301 / SAUG 1402/1)</name>
    <name type="common">Anacystis nidulans</name>
    <dbReference type="NCBI Taxonomy" id="269084"/>
    <lineage>
        <taxon>Bacteria</taxon>
        <taxon>Bacillati</taxon>
        <taxon>Cyanobacteriota</taxon>
        <taxon>Cyanophyceae</taxon>
        <taxon>Synechococcales</taxon>
        <taxon>Synechococcaceae</taxon>
        <taxon>Synechococcus</taxon>
    </lineage>
</organism>
<name>TRPD_SYNP6</name>
<proteinExistence type="inferred from homology"/>
<dbReference type="EC" id="2.4.2.18" evidence="1"/>
<dbReference type="EMBL" id="AP008231">
    <property type="protein sequence ID" value="BAD80159.1"/>
    <property type="molecule type" value="Genomic_DNA"/>
</dbReference>
<dbReference type="RefSeq" id="WP_011244279.1">
    <property type="nucleotide sequence ID" value="NC_006576.1"/>
</dbReference>
<dbReference type="SMR" id="Q5N0L1"/>
<dbReference type="KEGG" id="syc:syc1969_d"/>
<dbReference type="eggNOG" id="COG0547">
    <property type="taxonomic scope" value="Bacteria"/>
</dbReference>
<dbReference type="UniPathway" id="UPA00035">
    <property type="reaction ID" value="UER00041"/>
</dbReference>
<dbReference type="Proteomes" id="UP000001175">
    <property type="component" value="Chromosome"/>
</dbReference>
<dbReference type="GO" id="GO:0005829">
    <property type="term" value="C:cytosol"/>
    <property type="evidence" value="ECO:0007669"/>
    <property type="project" value="TreeGrafter"/>
</dbReference>
<dbReference type="GO" id="GO:0004048">
    <property type="term" value="F:anthranilate phosphoribosyltransferase activity"/>
    <property type="evidence" value="ECO:0007669"/>
    <property type="project" value="UniProtKB-UniRule"/>
</dbReference>
<dbReference type="GO" id="GO:0000287">
    <property type="term" value="F:magnesium ion binding"/>
    <property type="evidence" value="ECO:0007669"/>
    <property type="project" value="UniProtKB-UniRule"/>
</dbReference>
<dbReference type="GO" id="GO:0000162">
    <property type="term" value="P:L-tryptophan biosynthetic process"/>
    <property type="evidence" value="ECO:0007669"/>
    <property type="project" value="UniProtKB-UniRule"/>
</dbReference>
<dbReference type="FunFam" id="3.40.1030.10:FF:000002">
    <property type="entry name" value="Anthranilate phosphoribosyltransferase"/>
    <property type="match status" value="1"/>
</dbReference>
<dbReference type="Gene3D" id="3.40.1030.10">
    <property type="entry name" value="Nucleoside phosphorylase/phosphoribosyltransferase catalytic domain"/>
    <property type="match status" value="1"/>
</dbReference>
<dbReference type="Gene3D" id="1.20.970.10">
    <property type="entry name" value="Transferase, Pyrimidine Nucleoside Phosphorylase, Chain C"/>
    <property type="match status" value="1"/>
</dbReference>
<dbReference type="HAMAP" id="MF_00211">
    <property type="entry name" value="TrpD"/>
    <property type="match status" value="1"/>
</dbReference>
<dbReference type="InterPro" id="IPR005940">
    <property type="entry name" value="Anthranilate_Pribosyl_Tfrase"/>
</dbReference>
<dbReference type="InterPro" id="IPR000312">
    <property type="entry name" value="Glycosyl_Trfase_fam3"/>
</dbReference>
<dbReference type="InterPro" id="IPR017459">
    <property type="entry name" value="Glycosyl_Trfase_fam3_N_dom"/>
</dbReference>
<dbReference type="InterPro" id="IPR036320">
    <property type="entry name" value="Glycosyl_Trfase_fam3_N_dom_sf"/>
</dbReference>
<dbReference type="InterPro" id="IPR035902">
    <property type="entry name" value="Nuc_phospho_transferase"/>
</dbReference>
<dbReference type="NCBIfam" id="TIGR01245">
    <property type="entry name" value="trpD"/>
    <property type="match status" value="1"/>
</dbReference>
<dbReference type="PANTHER" id="PTHR43285">
    <property type="entry name" value="ANTHRANILATE PHOSPHORIBOSYLTRANSFERASE"/>
    <property type="match status" value="1"/>
</dbReference>
<dbReference type="PANTHER" id="PTHR43285:SF2">
    <property type="entry name" value="ANTHRANILATE PHOSPHORIBOSYLTRANSFERASE"/>
    <property type="match status" value="1"/>
</dbReference>
<dbReference type="Pfam" id="PF02885">
    <property type="entry name" value="Glycos_trans_3N"/>
    <property type="match status" value="1"/>
</dbReference>
<dbReference type="Pfam" id="PF00591">
    <property type="entry name" value="Glycos_transf_3"/>
    <property type="match status" value="1"/>
</dbReference>
<dbReference type="SUPFAM" id="SSF52418">
    <property type="entry name" value="Nucleoside phosphorylase/phosphoribosyltransferase catalytic domain"/>
    <property type="match status" value="1"/>
</dbReference>
<dbReference type="SUPFAM" id="SSF47648">
    <property type="entry name" value="Nucleoside phosphorylase/phosphoribosyltransferase N-terminal domain"/>
    <property type="match status" value="1"/>
</dbReference>